<keyword id="KW-0121">Carboxypeptidase</keyword>
<keyword id="KW-1015">Disulfide bond</keyword>
<keyword id="KW-0325">Glycoprotein</keyword>
<keyword id="KW-0378">Hydrolase</keyword>
<keyword id="KW-0645">Protease</keyword>
<keyword id="KW-1185">Reference proteome</keyword>
<keyword id="KW-0964">Secreted</keyword>
<keyword id="KW-0732">Signal</keyword>
<reference key="1">
    <citation type="journal article" date="2000" name="Nature">
        <title>Sequence and analysis of chromosome 3 of the plant Arabidopsis thaliana.</title>
        <authorList>
            <person name="Salanoubat M."/>
            <person name="Lemcke K."/>
            <person name="Rieger M."/>
            <person name="Ansorge W."/>
            <person name="Unseld M."/>
            <person name="Fartmann B."/>
            <person name="Valle G."/>
            <person name="Bloecker H."/>
            <person name="Perez-Alonso M."/>
            <person name="Obermaier B."/>
            <person name="Delseny M."/>
            <person name="Boutry M."/>
            <person name="Grivell L.A."/>
            <person name="Mache R."/>
            <person name="Puigdomenech P."/>
            <person name="De Simone V."/>
            <person name="Choisne N."/>
            <person name="Artiguenave F."/>
            <person name="Robert C."/>
            <person name="Brottier P."/>
            <person name="Wincker P."/>
            <person name="Cattolico L."/>
            <person name="Weissenbach J."/>
            <person name="Saurin W."/>
            <person name="Quetier F."/>
            <person name="Schaefer M."/>
            <person name="Mueller-Auer S."/>
            <person name="Gabel C."/>
            <person name="Fuchs M."/>
            <person name="Benes V."/>
            <person name="Wurmbach E."/>
            <person name="Drzonek H."/>
            <person name="Erfle H."/>
            <person name="Jordan N."/>
            <person name="Bangert S."/>
            <person name="Wiedelmann R."/>
            <person name="Kranz H."/>
            <person name="Voss H."/>
            <person name="Holland R."/>
            <person name="Brandt P."/>
            <person name="Nyakatura G."/>
            <person name="Vezzi A."/>
            <person name="D'Angelo M."/>
            <person name="Pallavicini A."/>
            <person name="Toppo S."/>
            <person name="Simionati B."/>
            <person name="Conrad A."/>
            <person name="Hornischer K."/>
            <person name="Kauer G."/>
            <person name="Loehnert T.-H."/>
            <person name="Nordsiek G."/>
            <person name="Reichelt J."/>
            <person name="Scharfe M."/>
            <person name="Schoen O."/>
            <person name="Bargues M."/>
            <person name="Terol J."/>
            <person name="Climent J."/>
            <person name="Navarro P."/>
            <person name="Collado C."/>
            <person name="Perez-Perez A."/>
            <person name="Ottenwaelder B."/>
            <person name="Duchemin D."/>
            <person name="Cooke R."/>
            <person name="Laudie M."/>
            <person name="Berger-Llauro C."/>
            <person name="Purnelle B."/>
            <person name="Masuy D."/>
            <person name="de Haan M."/>
            <person name="Maarse A.C."/>
            <person name="Alcaraz J.-P."/>
            <person name="Cottet A."/>
            <person name="Casacuberta E."/>
            <person name="Monfort A."/>
            <person name="Argiriou A."/>
            <person name="Flores M."/>
            <person name="Liguori R."/>
            <person name="Vitale D."/>
            <person name="Mannhaupt G."/>
            <person name="Haase D."/>
            <person name="Schoof H."/>
            <person name="Rudd S."/>
            <person name="Zaccaria P."/>
            <person name="Mewes H.-W."/>
            <person name="Mayer K.F.X."/>
            <person name="Kaul S."/>
            <person name="Town C.D."/>
            <person name="Koo H.L."/>
            <person name="Tallon L.J."/>
            <person name="Jenkins J."/>
            <person name="Rooney T."/>
            <person name="Rizzo M."/>
            <person name="Walts A."/>
            <person name="Utterback T."/>
            <person name="Fujii C.Y."/>
            <person name="Shea T.P."/>
            <person name="Creasy T.H."/>
            <person name="Haas B."/>
            <person name="Maiti R."/>
            <person name="Wu D."/>
            <person name="Peterson J."/>
            <person name="Van Aken S."/>
            <person name="Pai G."/>
            <person name="Militscher J."/>
            <person name="Sellers P."/>
            <person name="Gill J.E."/>
            <person name="Feldblyum T.V."/>
            <person name="Preuss D."/>
            <person name="Lin X."/>
            <person name="Nierman W.C."/>
            <person name="Salzberg S.L."/>
            <person name="White O."/>
            <person name="Venter J.C."/>
            <person name="Fraser C.M."/>
            <person name="Kaneko T."/>
            <person name="Nakamura Y."/>
            <person name="Sato S."/>
            <person name="Kato T."/>
            <person name="Asamizu E."/>
            <person name="Sasamoto S."/>
            <person name="Kimura T."/>
            <person name="Idesawa K."/>
            <person name="Kawashima K."/>
            <person name="Kishida Y."/>
            <person name="Kiyokawa C."/>
            <person name="Kohara M."/>
            <person name="Matsumoto M."/>
            <person name="Matsuno A."/>
            <person name="Muraki A."/>
            <person name="Nakayama S."/>
            <person name="Nakazaki N."/>
            <person name="Shinpo S."/>
            <person name="Takeuchi C."/>
            <person name="Wada T."/>
            <person name="Watanabe A."/>
            <person name="Yamada M."/>
            <person name="Yasuda M."/>
            <person name="Tabata S."/>
        </authorList>
    </citation>
    <scope>NUCLEOTIDE SEQUENCE [LARGE SCALE GENOMIC DNA]</scope>
    <source>
        <strain>cv. Columbia</strain>
    </source>
</reference>
<reference key="2">
    <citation type="journal article" date="2000" name="DNA Res.">
        <title>Structural analysis of Arabidopsis thaliana chromosome 3. II. Sequence features of the 4,251,695 bp regions covered by 90 P1, TAC and BAC clones.</title>
        <authorList>
            <person name="Kaneko T."/>
            <person name="Katoh T."/>
            <person name="Sato S."/>
            <person name="Nakamura Y."/>
            <person name="Asamizu E."/>
            <person name="Tabata S."/>
        </authorList>
    </citation>
    <scope>NUCLEOTIDE SEQUENCE [LARGE SCALE GENOMIC DNA]</scope>
    <source>
        <strain>cv. Columbia</strain>
    </source>
</reference>
<reference key="3">
    <citation type="journal article" date="2017" name="Plant J.">
        <title>Araport11: a complete reannotation of the Arabidopsis thaliana reference genome.</title>
        <authorList>
            <person name="Cheng C.Y."/>
            <person name="Krishnakumar V."/>
            <person name="Chan A.P."/>
            <person name="Thibaud-Nissen F."/>
            <person name="Schobel S."/>
            <person name="Town C.D."/>
        </authorList>
    </citation>
    <scope>GENOME REANNOTATION</scope>
    <source>
        <strain>cv. Columbia</strain>
    </source>
</reference>
<reference key="4">
    <citation type="journal article" date="2005" name="Plant Physiol.">
        <title>An expression and bioinformatics analysis of the Arabidopsis serine carboxypeptidase-like gene family.</title>
        <authorList>
            <person name="Fraser C.M."/>
            <person name="Rider L.W."/>
            <person name="Chapple C."/>
        </authorList>
    </citation>
    <scope>GENE FAMILY</scope>
    <scope>TISSUE SPECIFICITY</scope>
    <scope>NOMENCLATURE</scope>
</reference>
<accession>Q9C7D4</accession>
<accession>Q9LHI4</accession>
<sequence length="435" mass="49237">MGSWIPKLLLLQLVLLLTKHADSSSIIKYLPGFEGPLPFELETGYIGVGEEDEDQMFYYFIKSESNPKTDPLLLWLSGGPGCSSFTGLIYENGPLGFKVEAYNGSIPTLVSTTYSWTKVANIIYLDQPVGTGFSYSRNPLADIPSDTGSAKRVDEFLRKWLTKHPEYFSNPFYAGGNSYSGKMVPVIVQEISNGNCIYGKPQIRLQGYVLGSPVTDYDLDRNSRIQFAHGMALISNELYESMKRTCGGNYIFVDPLNTECLELIKDYDNCVSGIYENLILVPKCDLTSPDCHSYRSMLSDYWANNESVRRALKVVEGTTGRWERCKWTLQNNKDIKSSIPYHKKNSIQGYRSLIFSGDHDMLTPYVGTQDWIRSLNYSIIDKWRPWMILDQVAGYTTTYANKMTFATVKGGGHTLDYKPDENSILFKRWISGQLL</sequence>
<name>SCP16_ARATH</name>
<evidence type="ECO:0000250" key="1"/>
<evidence type="ECO:0000255" key="2"/>
<evidence type="ECO:0000269" key="3">
    <source>
    </source>
</evidence>
<evidence type="ECO:0000305" key="4"/>
<protein>
    <recommendedName>
        <fullName>Serine carboxypeptidase-like 16</fullName>
        <ecNumber>3.4.16.-</ecNumber>
    </recommendedName>
</protein>
<feature type="signal peptide" evidence="2">
    <location>
        <begin position="1"/>
        <end position="23"/>
    </location>
</feature>
<feature type="chain" id="PRO_0000274630" description="Serine carboxypeptidase-like 16">
    <location>
        <begin position="24"/>
        <end position="435"/>
    </location>
</feature>
<feature type="active site" evidence="1">
    <location>
        <position position="178"/>
    </location>
</feature>
<feature type="active site" evidence="1">
    <location>
        <position position="360"/>
    </location>
</feature>
<feature type="active site" evidence="1">
    <location>
        <position position="413"/>
    </location>
</feature>
<feature type="glycosylation site" description="N-linked (GlcNAc...) asparagine" evidence="2">
    <location>
        <position position="103"/>
    </location>
</feature>
<feature type="glycosylation site" description="N-linked (GlcNAc...) asparagine" evidence="2">
    <location>
        <position position="305"/>
    </location>
</feature>
<feature type="glycosylation site" description="N-linked (GlcNAc...) asparagine" evidence="2">
    <location>
        <position position="376"/>
    </location>
</feature>
<feature type="disulfide bond" evidence="1">
    <location>
        <begin position="82"/>
        <end position="325"/>
    </location>
</feature>
<feature type="disulfide bond" evidence="1">
    <location>
        <begin position="246"/>
        <end position="260"/>
    </location>
</feature>
<feature type="disulfide bond" evidence="1">
    <location>
        <begin position="284"/>
        <end position="291"/>
    </location>
</feature>
<organism>
    <name type="scientific">Arabidopsis thaliana</name>
    <name type="common">Mouse-ear cress</name>
    <dbReference type="NCBI Taxonomy" id="3702"/>
    <lineage>
        <taxon>Eukaryota</taxon>
        <taxon>Viridiplantae</taxon>
        <taxon>Streptophyta</taxon>
        <taxon>Embryophyta</taxon>
        <taxon>Tracheophyta</taxon>
        <taxon>Spermatophyta</taxon>
        <taxon>Magnoliopsida</taxon>
        <taxon>eudicotyledons</taxon>
        <taxon>Gunneridae</taxon>
        <taxon>Pentapetalae</taxon>
        <taxon>rosids</taxon>
        <taxon>malvids</taxon>
        <taxon>Brassicales</taxon>
        <taxon>Brassicaceae</taxon>
        <taxon>Camelineae</taxon>
        <taxon>Arabidopsis</taxon>
    </lineage>
</organism>
<dbReference type="EC" id="3.4.16.-"/>
<dbReference type="EMBL" id="AC069472">
    <property type="protein sequence ID" value="AAG51080.1"/>
    <property type="molecule type" value="Genomic_DNA"/>
</dbReference>
<dbReference type="EMBL" id="AP002047">
    <property type="protein sequence ID" value="BAB03131.1"/>
    <property type="status" value="ALT_SEQ"/>
    <property type="molecule type" value="Genomic_DNA"/>
</dbReference>
<dbReference type="EMBL" id="CP002686">
    <property type="protein sequence ID" value="AEE75169.1"/>
    <property type="molecule type" value="Genomic_DNA"/>
</dbReference>
<dbReference type="RefSeq" id="NP_566414.3">
    <property type="nucleotide sequence ID" value="NM_112058.4"/>
</dbReference>
<dbReference type="SMR" id="Q9C7D4"/>
<dbReference type="FunCoup" id="Q9C7D4">
    <property type="interactions" value="957"/>
</dbReference>
<dbReference type="STRING" id="3702.Q9C7D4"/>
<dbReference type="ESTHER" id="arath-SCP16">
    <property type="family name" value="Carboxypeptidase_S10"/>
</dbReference>
<dbReference type="MEROPS" id="S10.A17"/>
<dbReference type="GlyCosmos" id="Q9C7D4">
    <property type="glycosylation" value="3 sites, No reported glycans"/>
</dbReference>
<dbReference type="GlyGen" id="Q9C7D4">
    <property type="glycosylation" value="3 sites"/>
</dbReference>
<dbReference type="iPTMnet" id="Q9C7D4"/>
<dbReference type="PaxDb" id="3702-AT3G12220.1"/>
<dbReference type="EnsemblPlants" id="AT3G12220.1">
    <property type="protein sequence ID" value="AT3G12220.1"/>
    <property type="gene ID" value="AT3G12220"/>
</dbReference>
<dbReference type="GeneID" id="820402"/>
<dbReference type="Gramene" id="AT3G12220.1">
    <property type="protein sequence ID" value="AT3G12220.1"/>
    <property type="gene ID" value="AT3G12220"/>
</dbReference>
<dbReference type="KEGG" id="ath:AT3G12220"/>
<dbReference type="Araport" id="AT3G12220"/>
<dbReference type="TAIR" id="AT3G12220">
    <property type="gene designation" value="SCPL16"/>
</dbReference>
<dbReference type="eggNOG" id="KOG1282">
    <property type="taxonomic scope" value="Eukaryota"/>
</dbReference>
<dbReference type="HOGENOM" id="CLU_008523_0_1_1"/>
<dbReference type="InParanoid" id="Q9C7D4"/>
<dbReference type="OMA" id="CRFTITY"/>
<dbReference type="PhylomeDB" id="Q9C7D4"/>
<dbReference type="BioCyc" id="ARA:AT3G12220-MONOMER"/>
<dbReference type="PRO" id="PR:Q9C7D4"/>
<dbReference type="Proteomes" id="UP000006548">
    <property type="component" value="Chromosome 3"/>
</dbReference>
<dbReference type="ExpressionAtlas" id="Q9C7D4">
    <property type="expression patterns" value="baseline and differential"/>
</dbReference>
<dbReference type="GO" id="GO:0005576">
    <property type="term" value="C:extracellular region"/>
    <property type="evidence" value="ECO:0007669"/>
    <property type="project" value="UniProtKB-SubCell"/>
</dbReference>
<dbReference type="GO" id="GO:0004185">
    <property type="term" value="F:serine-type carboxypeptidase activity"/>
    <property type="evidence" value="ECO:0007669"/>
    <property type="project" value="InterPro"/>
</dbReference>
<dbReference type="GO" id="GO:0006508">
    <property type="term" value="P:proteolysis"/>
    <property type="evidence" value="ECO:0007669"/>
    <property type="project" value="UniProtKB-KW"/>
</dbReference>
<dbReference type="FunFam" id="3.40.50.1820:FF:000148">
    <property type="entry name" value="Serine carboxypeptidase-like 11"/>
    <property type="match status" value="1"/>
</dbReference>
<dbReference type="Gene3D" id="3.40.50.1820">
    <property type="entry name" value="alpha/beta hydrolase"/>
    <property type="match status" value="1"/>
</dbReference>
<dbReference type="InterPro" id="IPR029058">
    <property type="entry name" value="AB_hydrolase_fold"/>
</dbReference>
<dbReference type="InterPro" id="IPR001563">
    <property type="entry name" value="Peptidase_S10"/>
</dbReference>
<dbReference type="PANTHER" id="PTHR11802:SF316">
    <property type="entry name" value="SERINE CARBOXYPEPTIDASE-LIKE 14-RELATED"/>
    <property type="match status" value="1"/>
</dbReference>
<dbReference type="PANTHER" id="PTHR11802">
    <property type="entry name" value="SERINE PROTEASE FAMILY S10 SERINE CARBOXYPEPTIDASE"/>
    <property type="match status" value="1"/>
</dbReference>
<dbReference type="Pfam" id="PF00450">
    <property type="entry name" value="Peptidase_S10"/>
    <property type="match status" value="1"/>
</dbReference>
<dbReference type="PRINTS" id="PR00724">
    <property type="entry name" value="CRBOXYPTASEC"/>
</dbReference>
<dbReference type="SUPFAM" id="SSF53474">
    <property type="entry name" value="alpha/beta-Hydrolases"/>
    <property type="match status" value="1"/>
</dbReference>
<proteinExistence type="evidence at transcript level"/>
<comment type="function">
    <text evidence="1">Probable carboxypeptidase.</text>
</comment>
<comment type="subcellular location">
    <subcellularLocation>
        <location evidence="4">Secreted</location>
    </subcellularLocation>
</comment>
<comment type="tissue specificity">
    <text evidence="3">Expressed in seedlings, roots and leaves.</text>
</comment>
<comment type="similarity">
    <text evidence="4">Belongs to the peptidase S10 family.</text>
</comment>
<comment type="sequence caution" evidence="4">
    <conflict type="erroneous gene model prediction">
        <sequence resource="EMBL-CDS" id="BAB03131"/>
    </conflict>
</comment>
<gene>
    <name type="primary">SCPL16</name>
    <name type="ordered locus">At3g12220</name>
    <name type="ORF">F28J15.109</name>
    <name type="ORF">F28J15.15</name>
</gene>